<sequence length="113" mass="12745">MAALGSPARTLRGLLRELRYLNAATGRPYRDTAAYRYLVKAFRAHRVTSEKLCRAQHELHFQAATYLCLLRSIRQHVALHQEFHGKGERSVEESAGLVGLQLPHQPGGKGWEP</sequence>
<gene>
    <name evidence="4" type="primary">Fmc1</name>
</gene>
<dbReference type="EMBL" id="BC098843">
    <property type="protein sequence ID" value="AAH98843.1"/>
    <property type="molecule type" value="mRNA"/>
</dbReference>
<dbReference type="RefSeq" id="NP_001032884.1">
    <property type="nucleotide sequence ID" value="NM_001037795.1"/>
</dbReference>
<dbReference type="SMR" id="Q4G012"/>
<dbReference type="FunCoup" id="Q4G012">
    <property type="interactions" value="991"/>
</dbReference>
<dbReference type="STRING" id="10116.ENSRNOP00000007544"/>
<dbReference type="iPTMnet" id="Q4G012"/>
<dbReference type="PhosphoSitePlus" id="Q4G012"/>
<dbReference type="PaxDb" id="10116-ENSRNOP00000007544"/>
<dbReference type="Ensembl" id="ENSRNOT00000007544.4">
    <property type="protein sequence ID" value="ENSRNOP00000007544.2"/>
    <property type="gene ID" value="ENSRNOG00000005618.4"/>
</dbReference>
<dbReference type="GeneID" id="500087"/>
<dbReference type="KEGG" id="rno:500087"/>
<dbReference type="UCSC" id="RGD:1559476">
    <property type="organism name" value="rat"/>
</dbReference>
<dbReference type="AGR" id="RGD:1559476"/>
<dbReference type="CTD" id="154791"/>
<dbReference type="RGD" id="1559476">
    <property type="gene designation" value="Fmc1"/>
</dbReference>
<dbReference type="eggNOG" id="ENOG502S1MM">
    <property type="taxonomic scope" value="Eukaryota"/>
</dbReference>
<dbReference type="GeneTree" id="ENSGT00390000012258"/>
<dbReference type="HOGENOM" id="CLU_159000_0_0_1"/>
<dbReference type="InParanoid" id="Q4G012"/>
<dbReference type="OMA" id="HHASLTY"/>
<dbReference type="OrthoDB" id="551431at2759"/>
<dbReference type="PhylomeDB" id="Q4G012"/>
<dbReference type="TreeFam" id="TF321497"/>
<dbReference type="PRO" id="PR:Q4G012"/>
<dbReference type="Proteomes" id="UP000002494">
    <property type="component" value="Chromosome 4"/>
</dbReference>
<dbReference type="Bgee" id="ENSRNOG00000005618">
    <property type="expression patterns" value="Expressed in heart and 20 other cell types or tissues"/>
</dbReference>
<dbReference type="GO" id="GO:0005739">
    <property type="term" value="C:mitochondrion"/>
    <property type="evidence" value="ECO:0000250"/>
    <property type="project" value="UniProtKB"/>
</dbReference>
<dbReference type="GO" id="GO:0008637">
    <property type="term" value="P:apoptotic mitochondrial changes"/>
    <property type="evidence" value="ECO:0000266"/>
    <property type="project" value="RGD"/>
</dbReference>
<dbReference type="GO" id="GO:0071542">
    <property type="term" value="P:dopaminergic neuron differentiation"/>
    <property type="evidence" value="ECO:0000266"/>
    <property type="project" value="RGD"/>
</dbReference>
<dbReference type="GO" id="GO:0033615">
    <property type="term" value="P:mitochondrial proton-transporting ATP synthase complex assembly"/>
    <property type="evidence" value="ECO:0000250"/>
    <property type="project" value="UniProtKB"/>
</dbReference>
<dbReference type="GO" id="GO:0007005">
    <property type="term" value="P:mitochondrion organization"/>
    <property type="evidence" value="ECO:0000266"/>
    <property type="project" value="RGD"/>
</dbReference>
<dbReference type="GO" id="GO:0061744">
    <property type="term" value="P:motor behavior"/>
    <property type="evidence" value="ECO:0000266"/>
    <property type="project" value="RGD"/>
</dbReference>
<dbReference type="GO" id="GO:0050995">
    <property type="term" value="P:negative regulation of lipid catabolic process"/>
    <property type="evidence" value="ECO:0000266"/>
    <property type="project" value="RGD"/>
</dbReference>
<dbReference type="GO" id="GO:0061469">
    <property type="term" value="P:regulation of type B pancreatic cell proliferation"/>
    <property type="evidence" value="ECO:0000266"/>
    <property type="project" value="RGD"/>
</dbReference>
<dbReference type="GO" id="GO:0009636">
    <property type="term" value="P:response to toxic substance"/>
    <property type="evidence" value="ECO:0000266"/>
    <property type="project" value="RGD"/>
</dbReference>
<dbReference type="CDD" id="cd20271">
    <property type="entry name" value="Complex1_LYR_FMC1"/>
    <property type="match status" value="1"/>
</dbReference>
<dbReference type="InterPro" id="IPR037667">
    <property type="entry name" value="FMC1_homologue"/>
</dbReference>
<dbReference type="PANTHER" id="PTHR31716">
    <property type="entry name" value="PROTEIN FMC1 HOMOLOG"/>
    <property type="match status" value="1"/>
</dbReference>
<dbReference type="PANTHER" id="PTHR31716:SF1">
    <property type="entry name" value="PROTEIN FMC1 HOMOLOG"/>
    <property type="match status" value="1"/>
</dbReference>
<dbReference type="Pfam" id="PF13233">
    <property type="entry name" value="Complex1_LYR_2"/>
    <property type="match status" value="1"/>
</dbReference>
<feature type="chain" id="PRO_0000328782" description="Protein FMC1 homolog">
    <location>
        <begin position="1"/>
        <end position="113"/>
    </location>
</feature>
<feature type="region of interest" description="Disordered" evidence="2">
    <location>
        <begin position="94"/>
        <end position="113"/>
    </location>
</feature>
<organism>
    <name type="scientific">Rattus norvegicus</name>
    <name type="common">Rat</name>
    <dbReference type="NCBI Taxonomy" id="10116"/>
    <lineage>
        <taxon>Eukaryota</taxon>
        <taxon>Metazoa</taxon>
        <taxon>Chordata</taxon>
        <taxon>Craniata</taxon>
        <taxon>Vertebrata</taxon>
        <taxon>Euteleostomi</taxon>
        <taxon>Mammalia</taxon>
        <taxon>Eutheria</taxon>
        <taxon>Euarchontoglires</taxon>
        <taxon>Glires</taxon>
        <taxon>Rodentia</taxon>
        <taxon>Myomorpha</taxon>
        <taxon>Muroidea</taxon>
        <taxon>Muridae</taxon>
        <taxon>Murinae</taxon>
        <taxon>Rattus</taxon>
    </lineage>
</organism>
<evidence type="ECO:0000250" key="1">
    <source>
        <dbReference type="UniProtKB" id="Q96HJ9"/>
    </source>
</evidence>
<evidence type="ECO:0000256" key="2">
    <source>
        <dbReference type="SAM" id="MobiDB-lite"/>
    </source>
</evidence>
<evidence type="ECO:0000305" key="3"/>
<evidence type="ECO:0000312" key="4">
    <source>
        <dbReference type="RGD" id="1559476"/>
    </source>
</evidence>
<accession>Q4G012</accession>
<protein>
    <recommendedName>
        <fullName>Protein FMC1 homolog</fullName>
    </recommendedName>
    <alternativeName>
        <fullName evidence="4">Formation of mitochondrial complex V assembly factor 1 homolog</fullName>
    </alternativeName>
</protein>
<comment type="function">
    <text evidence="1">Plays a role in the assembly/stability of the mitochondrial membrane ATP synthase (F(1)F(0) ATP synthase or Complex V).</text>
</comment>
<comment type="subunit">
    <text evidence="1">Interacts with ATPAF2.</text>
</comment>
<comment type="subcellular location">
    <subcellularLocation>
        <location evidence="1">Mitochondrion</location>
    </subcellularLocation>
</comment>
<comment type="similarity">
    <text evidence="3">Belongs to the FMC1 family.</text>
</comment>
<keyword id="KW-0496">Mitochondrion</keyword>
<keyword id="KW-1185">Reference proteome</keyword>
<reference key="1">
    <citation type="journal article" date="2004" name="Genome Res.">
        <title>The status, quality, and expansion of the NIH full-length cDNA project: the Mammalian Gene Collection (MGC).</title>
        <authorList>
            <consortium name="The MGC Project Team"/>
        </authorList>
    </citation>
    <scope>NUCLEOTIDE SEQUENCE [LARGE SCALE MRNA]</scope>
    <source>
        <tissue>Spleen</tissue>
    </source>
</reference>
<name>FMC1_RAT</name>
<proteinExistence type="inferred from homology"/>